<reference key="1">
    <citation type="journal article" date="2011" name="Stand. Genomic Sci.">
        <title>Complete genome sequence of Rhodospirillum rubrum type strain (S1).</title>
        <authorList>
            <person name="Munk A.C."/>
            <person name="Copeland A."/>
            <person name="Lucas S."/>
            <person name="Lapidus A."/>
            <person name="Del Rio T.G."/>
            <person name="Barry K."/>
            <person name="Detter J.C."/>
            <person name="Hammon N."/>
            <person name="Israni S."/>
            <person name="Pitluck S."/>
            <person name="Brettin T."/>
            <person name="Bruce D."/>
            <person name="Han C."/>
            <person name="Tapia R."/>
            <person name="Gilna P."/>
            <person name="Schmutz J."/>
            <person name="Larimer F."/>
            <person name="Land M."/>
            <person name="Kyrpides N.C."/>
            <person name="Mavromatis K."/>
            <person name="Richardson P."/>
            <person name="Rohde M."/>
            <person name="Goeker M."/>
            <person name="Klenk H.P."/>
            <person name="Zhang Y."/>
            <person name="Roberts G.P."/>
            <person name="Reslewic S."/>
            <person name="Schwartz D.C."/>
        </authorList>
    </citation>
    <scope>NUCLEOTIDE SEQUENCE [LARGE SCALE GENOMIC DNA]</scope>
    <source>
        <strain>ATCC 11170 / ATH 1.1.1 / DSM 467 / LMG 4362 / NCIMB 8255 / S1</strain>
    </source>
</reference>
<proteinExistence type="inferred from homology"/>
<keyword id="KW-0067">ATP-binding</keyword>
<keyword id="KW-0131">Cell cycle</keyword>
<keyword id="KW-0132">Cell division</keyword>
<keyword id="KW-0133">Cell shape</keyword>
<keyword id="KW-0961">Cell wall biogenesis/degradation</keyword>
<keyword id="KW-0963">Cytoplasm</keyword>
<keyword id="KW-0436">Ligase</keyword>
<keyword id="KW-0547">Nucleotide-binding</keyword>
<keyword id="KW-0573">Peptidoglycan synthesis</keyword>
<keyword id="KW-1185">Reference proteome</keyword>
<sequence length="481" mass="51449">MRALPLDIGPLHFVGIGGIGMSGIAEVLHNLGYRVQGSDLSDNANVKRLRDLGIPIAIGHKAANLGDAQVVVISSAVKASNPEVMDARARFLPVVRRAEMLGELMRLKWSIAVAGTHGKTTTTSLVAQLLDAAGLDPTVINGGILNARGTNAYLGTGEWMVVEADESDGTFTKLPATISLVTNIDPEHLDFYGTFDKVREAFRAFIHNLPFYGFACMCIDHPEVQAMIPQLQDRKIITYGLSPQADIRGANVTLGPRGARFDVILTDRAGGGSRTIEGIRLPMYGRHNVLNALGAIGIAAEMGIDDAVIRDGLYHFEGVKRRFTRTGDAGGVTVIDDYGHHPVEIAAVLKAARDATEREVIAVVQPHRYSRLNSLFEDFCTCFNDADQVVVADVYAAGEQPIPGASKEALAEGLKVHGHKSVHVLTNEQALPELIARIAKPGDLVVCLGAGSISTWANALPKQLEAVQGRRRQTTLAGGAP</sequence>
<evidence type="ECO:0000255" key="1">
    <source>
        <dbReference type="HAMAP-Rule" id="MF_00046"/>
    </source>
</evidence>
<feature type="chain" id="PRO_0000242588" description="UDP-N-acetylmuramate--L-alanine ligase">
    <location>
        <begin position="1"/>
        <end position="481"/>
    </location>
</feature>
<feature type="binding site" evidence="1">
    <location>
        <begin position="115"/>
        <end position="121"/>
    </location>
    <ligand>
        <name>ATP</name>
        <dbReference type="ChEBI" id="CHEBI:30616"/>
    </ligand>
</feature>
<gene>
    <name evidence="1" type="primary">murC</name>
    <name type="ordered locus">Rru_A0949</name>
</gene>
<comment type="function">
    <text evidence="1">Cell wall formation.</text>
</comment>
<comment type="catalytic activity">
    <reaction evidence="1">
        <text>UDP-N-acetyl-alpha-D-muramate + L-alanine + ATP = UDP-N-acetyl-alpha-D-muramoyl-L-alanine + ADP + phosphate + H(+)</text>
        <dbReference type="Rhea" id="RHEA:23372"/>
        <dbReference type="ChEBI" id="CHEBI:15378"/>
        <dbReference type="ChEBI" id="CHEBI:30616"/>
        <dbReference type="ChEBI" id="CHEBI:43474"/>
        <dbReference type="ChEBI" id="CHEBI:57972"/>
        <dbReference type="ChEBI" id="CHEBI:70757"/>
        <dbReference type="ChEBI" id="CHEBI:83898"/>
        <dbReference type="ChEBI" id="CHEBI:456216"/>
        <dbReference type="EC" id="6.3.2.8"/>
    </reaction>
</comment>
<comment type="pathway">
    <text evidence="1">Cell wall biogenesis; peptidoglycan biosynthesis.</text>
</comment>
<comment type="subcellular location">
    <subcellularLocation>
        <location evidence="1">Cytoplasm</location>
    </subcellularLocation>
</comment>
<comment type="similarity">
    <text evidence="1">Belongs to the MurCDEF family.</text>
</comment>
<accession>Q2RVU5</accession>
<protein>
    <recommendedName>
        <fullName evidence="1">UDP-N-acetylmuramate--L-alanine ligase</fullName>
        <ecNumber evidence="1">6.3.2.8</ecNumber>
    </recommendedName>
    <alternativeName>
        <fullName evidence="1">UDP-N-acetylmuramoyl-L-alanine synthetase</fullName>
    </alternativeName>
</protein>
<organism>
    <name type="scientific">Rhodospirillum rubrum (strain ATCC 11170 / ATH 1.1.1 / DSM 467 / LMG 4362 / NCIMB 8255 / S1)</name>
    <dbReference type="NCBI Taxonomy" id="269796"/>
    <lineage>
        <taxon>Bacteria</taxon>
        <taxon>Pseudomonadati</taxon>
        <taxon>Pseudomonadota</taxon>
        <taxon>Alphaproteobacteria</taxon>
        <taxon>Rhodospirillales</taxon>
        <taxon>Rhodospirillaceae</taxon>
        <taxon>Rhodospirillum</taxon>
    </lineage>
</organism>
<name>MURC_RHORT</name>
<dbReference type="EC" id="6.3.2.8" evidence="1"/>
<dbReference type="EMBL" id="CP000230">
    <property type="protein sequence ID" value="ABC21750.1"/>
    <property type="molecule type" value="Genomic_DNA"/>
</dbReference>
<dbReference type="RefSeq" id="WP_011388704.1">
    <property type="nucleotide sequence ID" value="NC_007643.1"/>
</dbReference>
<dbReference type="RefSeq" id="YP_426037.1">
    <property type="nucleotide sequence ID" value="NC_007643.1"/>
</dbReference>
<dbReference type="SMR" id="Q2RVU5"/>
<dbReference type="STRING" id="269796.Rru_A0949"/>
<dbReference type="EnsemblBacteria" id="ABC21750">
    <property type="protein sequence ID" value="ABC21750"/>
    <property type="gene ID" value="Rru_A0949"/>
</dbReference>
<dbReference type="KEGG" id="rru:Rru_A0949"/>
<dbReference type="PATRIC" id="fig|269796.9.peg.1005"/>
<dbReference type="eggNOG" id="COG0773">
    <property type="taxonomic scope" value="Bacteria"/>
</dbReference>
<dbReference type="HOGENOM" id="CLU_028104_2_2_5"/>
<dbReference type="PhylomeDB" id="Q2RVU5"/>
<dbReference type="UniPathway" id="UPA00219"/>
<dbReference type="Proteomes" id="UP000001929">
    <property type="component" value="Chromosome"/>
</dbReference>
<dbReference type="GO" id="GO:0005737">
    <property type="term" value="C:cytoplasm"/>
    <property type="evidence" value="ECO:0007669"/>
    <property type="project" value="UniProtKB-SubCell"/>
</dbReference>
<dbReference type="GO" id="GO:0005524">
    <property type="term" value="F:ATP binding"/>
    <property type="evidence" value="ECO:0007669"/>
    <property type="project" value="UniProtKB-UniRule"/>
</dbReference>
<dbReference type="GO" id="GO:0008763">
    <property type="term" value="F:UDP-N-acetylmuramate-L-alanine ligase activity"/>
    <property type="evidence" value="ECO:0007669"/>
    <property type="project" value="UniProtKB-UniRule"/>
</dbReference>
<dbReference type="GO" id="GO:0051301">
    <property type="term" value="P:cell division"/>
    <property type="evidence" value="ECO:0007669"/>
    <property type="project" value="UniProtKB-KW"/>
</dbReference>
<dbReference type="GO" id="GO:0071555">
    <property type="term" value="P:cell wall organization"/>
    <property type="evidence" value="ECO:0007669"/>
    <property type="project" value="UniProtKB-KW"/>
</dbReference>
<dbReference type="GO" id="GO:0009252">
    <property type="term" value="P:peptidoglycan biosynthetic process"/>
    <property type="evidence" value="ECO:0007669"/>
    <property type="project" value="UniProtKB-UniRule"/>
</dbReference>
<dbReference type="GO" id="GO:0008360">
    <property type="term" value="P:regulation of cell shape"/>
    <property type="evidence" value="ECO:0007669"/>
    <property type="project" value="UniProtKB-KW"/>
</dbReference>
<dbReference type="Gene3D" id="3.90.190.20">
    <property type="entry name" value="Mur ligase, C-terminal domain"/>
    <property type="match status" value="1"/>
</dbReference>
<dbReference type="Gene3D" id="3.40.1190.10">
    <property type="entry name" value="Mur-like, catalytic domain"/>
    <property type="match status" value="1"/>
</dbReference>
<dbReference type="Gene3D" id="3.40.50.720">
    <property type="entry name" value="NAD(P)-binding Rossmann-like Domain"/>
    <property type="match status" value="1"/>
</dbReference>
<dbReference type="HAMAP" id="MF_00046">
    <property type="entry name" value="MurC"/>
    <property type="match status" value="1"/>
</dbReference>
<dbReference type="InterPro" id="IPR036565">
    <property type="entry name" value="Mur-like_cat_sf"/>
</dbReference>
<dbReference type="InterPro" id="IPR004101">
    <property type="entry name" value="Mur_ligase_C"/>
</dbReference>
<dbReference type="InterPro" id="IPR036615">
    <property type="entry name" value="Mur_ligase_C_dom_sf"/>
</dbReference>
<dbReference type="InterPro" id="IPR013221">
    <property type="entry name" value="Mur_ligase_cen"/>
</dbReference>
<dbReference type="InterPro" id="IPR000713">
    <property type="entry name" value="Mur_ligase_N"/>
</dbReference>
<dbReference type="InterPro" id="IPR050061">
    <property type="entry name" value="MurCDEF_pg_biosynth"/>
</dbReference>
<dbReference type="InterPro" id="IPR005758">
    <property type="entry name" value="UDP-N-AcMur_Ala_ligase_MurC"/>
</dbReference>
<dbReference type="NCBIfam" id="TIGR01082">
    <property type="entry name" value="murC"/>
    <property type="match status" value="1"/>
</dbReference>
<dbReference type="PANTHER" id="PTHR43445:SF3">
    <property type="entry name" value="UDP-N-ACETYLMURAMATE--L-ALANINE LIGASE"/>
    <property type="match status" value="1"/>
</dbReference>
<dbReference type="PANTHER" id="PTHR43445">
    <property type="entry name" value="UDP-N-ACETYLMURAMATE--L-ALANINE LIGASE-RELATED"/>
    <property type="match status" value="1"/>
</dbReference>
<dbReference type="Pfam" id="PF01225">
    <property type="entry name" value="Mur_ligase"/>
    <property type="match status" value="1"/>
</dbReference>
<dbReference type="Pfam" id="PF02875">
    <property type="entry name" value="Mur_ligase_C"/>
    <property type="match status" value="1"/>
</dbReference>
<dbReference type="Pfam" id="PF08245">
    <property type="entry name" value="Mur_ligase_M"/>
    <property type="match status" value="1"/>
</dbReference>
<dbReference type="SUPFAM" id="SSF51984">
    <property type="entry name" value="MurCD N-terminal domain"/>
    <property type="match status" value="1"/>
</dbReference>
<dbReference type="SUPFAM" id="SSF53623">
    <property type="entry name" value="MurD-like peptide ligases, catalytic domain"/>
    <property type="match status" value="1"/>
</dbReference>
<dbReference type="SUPFAM" id="SSF53244">
    <property type="entry name" value="MurD-like peptide ligases, peptide-binding domain"/>
    <property type="match status" value="1"/>
</dbReference>